<name>PSBH_GOSHI</name>
<geneLocation type="chloroplast"/>
<evidence type="ECO:0000250" key="1">
    <source>
        <dbReference type="UniProtKB" id="P56780"/>
    </source>
</evidence>
<evidence type="ECO:0000255" key="2">
    <source>
        <dbReference type="HAMAP-Rule" id="MF_00752"/>
    </source>
</evidence>
<sequence>MATQTVEGSSRSGPRRTVVGDFLKPLNSEYGKVAPGWGTTPLMGVAMALFAIFLSIILEIYNSSVLLDGISMN</sequence>
<feature type="initiator methionine" description="Removed" evidence="1">
    <location>
        <position position="1"/>
    </location>
</feature>
<feature type="chain" id="PRO_0000275756" description="Photosystem II reaction center protein H">
    <location>
        <begin position="2"/>
        <end position="73"/>
    </location>
</feature>
<feature type="transmembrane region" description="Helical" evidence="2">
    <location>
        <begin position="41"/>
        <end position="61"/>
    </location>
</feature>
<feature type="modified residue" description="Phosphothreonine" evidence="2">
    <location>
        <position position="3"/>
    </location>
</feature>
<feature type="modified residue" description="Phosphothreonine" evidence="2">
    <location>
        <position position="5"/>
    </location>
</feature>
<protein>
    <recommendedName>
        <fullName evidence="2">Photosystem II reaction center protein H</fullName>
        <shortName evidence="2">PSII-H</shortName>
    </recommendedName>
    <alternativeName>
        <fullName evidence="2">Photosystem II 10 kDa phosphoprotein</fullName>
    </alternativeName>
</protein>
<accession>Q2L934</accession>
<reference key="1">
    <citation type="journal article" date="2006" name="BMC Genomics">
        <title>The complete chloroplast genome sequence of Gossypium hirsutum: organization and phylogenetic relationships to other angiosperms.</title>
        <authorList>
            <person name="Lee S.-B."/>
            <person name="Kaittanis C."/>
            <person name="Jansen R.K."/>
            <person name="Hostetler J.B."/>
            <person name="Tallon L.J."/>
            <person name="Town C.D."/>
            <person name="Daniell H."/>
        </authorList>
    </citation>
    <scope>NUCLEOTIDE SEQUENCE [LARGE SCALE GENOMIC DNA]</scope>
    <source>
        <strain>cv. Coker 310FR</strain>
    </source>
</reference>
<organism>
    <name type="scientific">Gossypium hirsutum</name>
    <name type="common">Upland cotton</name>
    <name type="synonym">Gossypium mexicanum</name>
    <dbReference type="NCBI Taxonomy" id="3635"/>
    <lineage>
        <taxon>Eukaryota</taxon>
        <taxon>Viridiplantae</taxon>
        <taxon>Streptophyta</taxon>
        <taxon>Embryophyta</taxon>
        <taxon>Tracheophyta</taxon>
        <taxon>Spermatophyta</taxon>
        <taxon>Magnoliopsida</taxon>
        <taxon>eudicotyledons</taxon>
        <taxon>Gunneridae</taxon>
        <taxon>Pentapetalae</taxon>
        <taxon>rosids</taxon>
        <taxon>malvids</taxon>
        <taxon>Malvales</taxon>
        <taxon>Malvaceae</taxon>
        <taxon>Malvoideae</taxon>
        <taxon>Gossypium</taxon>
    </lineage>
</organism>
<dbReference type="EMBL" id="DQ345959">
    <property type="protein sequence ID" value="ABC73656.1"/>
    <property type="molecule type" value="Genomic_DNA"/>
</dbReference>
<dbReference type="RefSeq" id="YP_538965.1">
    <property type="nucleotide sequence ID" value="NC_007944.1"/>
</dbReference>
<dbReference type="SMR" id="Q2L934"/>
<dbReference type="GeneID" id="3989133"/>
<dbReference type="KEGG" id="ghi:3989133"/>
<dbReference type="OMA" id="APEWETT"/>
<dbReference type="OrthoDB" id="16975at41938"/>
<dbReference type="Proteomes" id="UP000189702">
    <property type="component" value="Chloroplast Pltd"/>
</dbReference>
<dbReference type="GO" id="GO:0009535">
    <property type="term" value="C:chloroplast thylakoid membrane"/>
    <property type="evidence" value="ECO:0007669"/>
    <property type="project" value="UniProtKB-SubCell"/>
</dbReference>
<dbReference type="GO" id="GO:0009523">
    <property type="term" value="C:photosystem II"/>
    <property type="evidence" value="ECO:0007669"/>
    <property type="project" value="UniProtKB-KW"/>
</dbReference>
<dbReference type="GO" id="GO:0042301">
    <property type="term" value="F:phosphate ion binding"/>
    <property type="evidence" value="ECO:0007669"/>
    <property type="project" value="InterPro"/>
</dbReference>
<dbReference type="GO" id="GO:0015979">
    <property type="term" value="P:photosynthesis"/>
    <property type="evidence" value="ECO:0007669"/>
    <property type="project" value="UniProtKB-UniRule"/>
</dbReference>
<dbReference type="GO" id="GO:0050821">
    <property type="term" value="P:protein stabilization"/>
    <property type="evidence" value="ECO:0007669"/>
    <property type="project" value="InterPro"/>
</dbReference>
<dbReference type="FunFam" id="1.20.5.880:FF:000001">
    <property type="entry name" value="Photosystem II reaction center protein H"/>
    <property type="match status" value="1"/>
</dbReference>
<dbReference type="Gene3D" id="1.20.5.880">
    <property type="entry name" value="Photosystem II reaction center protein H"/>
    <property type="match status" value="1"/>
</dbReference>
<dbReference type="HAMAP" id="MF_00752">
    <property type="entry name" value="PSII_PsbH"/>
    <property type="match status" value="1"/>
</dbReference>
<dbReference type="InterPro" id="IPR001056">
    <property type="entry name" value="PSII_PsbH"/>
</dbReference>
<dbReference type="InterPro" id="IPR036863">
    <property type="entry name" value="PSII_PsbH_sf"/>
</dbReference>
<dbReference type="NCBIfam" id="NF002728">
    <property type="entry name" value="PRK02624.1"/>
    <property type="match status" value="1"/>
</dbReference>
<dbReference type="PANTHER" id="PTHR34469">
    <property type="entry name" value="PHOTOSYSTEM II REACTION CENTER PROTEIN H"/>
    <property type="match status" value="1"/>
</dbReference>
<dbReference type="PANTHER" id="PTHR34469:SF4">
    <property type="entry name" value="PHOTOSYSTEM II REACTION CENTER PROTEIN H"/>
    <property type="match status" value="1"/>
</dbReference>
<dbReference type="Pfam" id="PF00737">
    <property type="entry name" value="PsbH"/>
    <property type="match status" value="1"/>
</dbReference>
<dbReference type="SUPFAM" id="SSF161025">
    <property type="entry name" value="Photosystem II 10 kDa phosphoprotein PsbH"/>
    <property type="match status" value="1"/>
</dbReference>
<proteinExistence type="inferred from homology"/>
<comment type="function">
    <text evidence="2">One of the components of the core complex of photosystem II (PSII), required for its stability and/or assembly. PSII is a light-driven water:plastoquinone oxidoreductase that uses light energy to abstract electrons from H(2)O, generating O(2) and a proton gradient subsequently used for ATP formation. It consists of a core antenna complex that captures photons, and an electron transfer chain that converts photonic excitation into a charge separation.</text>
</comment>
<comment type="subunit">
    <text evidence="2">PSII is composed of 1 copy each of membrane proteins PsbA, PsbB, PsbC, PsbD, PsbE, PsbF, PsbH, PsbI, PsbJ, PsbK, PsbL, PsbM, PsbT, PsbX, PsbY, PsbZ, Psb30/Ycf12, at least 3 peripheral proteins of the oxygen-evolving complex and a large number of cofactors. It forms dimeric complexes.</text>
</comment>
<comment type="subcellular location">
    <subcellularLocation>
        <location evidence="2">Plastid</location>
        <location evidence="2">Chloroplast thylakoid membrane</location>
        <topology evidence="2">Single-pass membrane protein</topology>
    </subcellularLocation>
</comment>
<comment type="PTM">
    <text evidence="2">Phosphorylation is a light-dependent reaction catalyzed by a membrane-bound kinase; phosphorylation occurs on Thr residue(s) in the N-terminus of the protein.</text>
</comment>
<comment type="similarity">
    <text evidence="2">Belongs to the PsbH family.</text>
</comment>
<gene>
    <name evidence="2" type="primary">psbH</name>
</gene>
<keyword id="KW-0150">Chloroplast</keyword>
<keyword id="KW-0472">Membrane</keyword>
<keyword id="KW-0597">Phosphoprotein</keyword>
<keyword id="KW-0602">Photosynthesis</keyword>
<keyword id="KW-0604">Photosystem II</keyword>
<keyword id="KW-0934">Plastid</keyword>
<keyword id="KW-1185">Reference proteome</keyword>
<keyword id="KW-0793">Thylakoid</keyword>
<keyword id="KW-0812">Transmembrane</keyword>
<keyword id="KW-1133">Transmembrane helix</keyword>